<feature type="chain" id="PRO_0000317438" description="Phospholipid phosphatase-related protein type 4">
    <location>
        <begin position="1"/>
        <end position="766"/>
    </location>
</feature>
<feature type="transmembrane region" description="Helical" evidence="3">
    <location>
        <begin position="68"/>
        <end position="88"/>
    </location>
</feature>
<feature type="transmembrane region" description="Helical" evidence="3">
    <location>
        <begin position="120"/>
        <end position="140"/>
    </location>
</feature>
<feature type="transmembrane region" description="Helical" evidence="3">
    <location>
        <begin position="179"/>
        <end position="199"/>
    </location>
</feature>
<feature type="transmembrane region" description="Helical" evidence="3">
    <location>
        <begin position="248"/>
        <end position="268"/>
    </location>
</feature>
<feature type="transmembrane region" description="Helical" evidence="3">
    <location>
        <begin position="277"/>
        <end position="297"/>
    </location>
</feature>
<feature type="transmembrane region" description="Helical" evidence="3">
    <location>
        <begin position="309"/>
        <end position="329"/>
    </location>
</feature>
<feature type="region of interest" description="Disordered" evidence="4">
    <location>
        <begin position="454"/>
        <end position="503"/>
    </location>
</feature>
<feature type="region of interest" description="Disordered" evidence="4">
    <location>
        <begin position="510"/>
        <end position="529"/>
    </location>
</feature>
<feature type="region of interest" description="Disordered" evidence="4">
    <location>
        <begin position="634"/>
        <end position="654"/>
    </location>
</feature>
<feature type="region of interest" description="Disordered" evidence="4">
    <location>
        <begin position="672"/>
        <end position="705"/>
    </location>
</feature>
<feature type="region of interest" description="Disordered" evidence="4">
    <location>
        <begin position="741"/>
        <end position="766"/>
    </location>
</feature>
<feature type="compositionally biased region" description="Basic residues" evidence="4">
    <location>
        <begin position="688"/>
        <end position="702"/>
    </location>
</feature>
<feature type="compositionally biased region" description="Polar residues" evidence="4">
    <location>
        <begin position="743"/>
        <end position="752"/>
    </location>
</feature>
<feature type="modified residue" description="Phosphoserine" evidence="1">
    <location>
        <position position="37"/>
    </location>
</feature>
<feature type="modified residue" description="Phosphoserine" evidence="12">
    <location>
        <position position="347"/>
    </location>
</feature>
<feature type="modified residue" description="Phosphoserine" evidence="12">
    <location>
        <position position="386"/>
    </location>
</feature>
<feature type="modified residue" description="Phosphoserine" evidence="1">
    <location>
        <position position="439"/>
    </location>
</feature>
<feature type="modified residue" description="Phosphoserine" evidence="1">
    <location>
        <position position="462"/>
    </location>
</feature>
<feature type="modified residue" description="Phosphoserine" evidence="12">
    <location>
        <position position="474"/>
    </location>
</feature>
<feature type="modified residue" description="Phosphoserine" evidence="1">
    <location>
        <position position="608"/>
    </location>
</feature>
<feature type="glycosylation site" description="N-linked (GlcNAc...) asparagine" evidence="3">
    <location>
        <position position="269"/>
    </location>
</feature>
<feature type="glycosylation site" description="N-linked (GlcNAc...) asparagine" evidence="3">
    <location>
        <position position="363"/>
    </location>
</feature>
<feature type="glycosylation site" description="N-linked (GlcNAc...) asparagine" evidence="3">
    <location>
        <position position="433"/>
    </location>
</feature>
<feature type="glycosylation site" description="N-linked (GlcNAc...) asparagine" evidence="3">
    <location>
        <position position="456"/>
    </location>
</feature>
<feature type="glycosylation site" description="N-linked (GlcNAc...) asparagine" evidence="3">
    <location>
        <position position="515"/>
    </location>
</feature>
<feature type="glycosylation site" description="N-linked (GlcNAc...) asparagine" evidence="3">
    <location>
        <position position="545"/>
    </location>
</feature>
<sequence length="766" mass="83362">MQRAGSSGARGECDISGTGRLRLEQAARLGGRAVHTSPTGGLGARQVAGMSAKERPKGKVIKDSVTLLPCFYFVELPILASSVVSLYFLELTDVFKPVHSGFSCYDRSLSMPYIEPTQEAIPFLMLLSLAFAGPAITIMVGEGILYCCLSKRRNGAGLEPNINAGGCNFNSFLRRAVRFVGVHVVGLCSTALITDIIQLATGYQAPYFLTVCKPMYTSLEGSCKENSYIVEEICSGSDLTVINNGKKSFPSQHATLAAFAAVYVSMYFNSTLTDSSKLLKPLLVFTFIICGIICGLTRITQYKNHPVDVYCGFLIGGGIALYLGLYAVGNFLPSEDSMLQHRDALRSLTDLNQDPSRVLSAKNGSSGDGIAHTEGILNRNHRDASSLTNLKRANADVEIITPRSPMGKESMVTFSNTLPRANTPSVEDPVRRNASIHASMDSARSKQLLTQWKSKNESRKMSLQVMDSEPEGQSPPRSIEMRSSSEPSRVGVNGDHHVPGNQYLKIQPGTVPGCNNSMPAGPRVSIQSRPGSSQLVHIPEETQENISTSPKSSSARAKWLKAAEKTVACNRGNNQPRIMQVIAMSKQQGVLQSSPKNAEGSTVTCTGSIRYKTLTDHEPSGIVRVEAHPENNRPIIQIPSSTEGEGSGSWKWKAPEKSSLRQTYELNDLNRDSESCESLKDSFGSGDRKRKHIDSNEHHHHGITTIRVTPVEGSEIGSETLSVSSSRDSTLRRKGNIILIPERSNSPENTRNIFYKGTSPTRPYKD</sequence>
<accession>Q7TMB7</accession>
<protein>
    <recommendedName>
        <fullName evidence="8">Phospholipid phosphatase-related protein type 4</fullName>
    </recommendedName>
    <alternativeName>
        <fullName evidence="2">Brain-specific phosphatidic acid phosphatase-like protein 1</fullName>
    </alternativeName>
    <alternativeName>
        <fullName evidence="10">Inactive 2-lysophosphatidate phosphatase PLPPR4</fullName>
    </alternativeName>
    <alternativeName>
        <fullName evidence="2">Lipid phosphate phosphatase-related protein type 4</fullName>
    </alternativeName>
    <alternativeName>
        <fullName evidence="9">Plasticity-related gene 1 protein</fullName>
        <shortName evidence="7">PRG-1</shortName>
    </alternativeName>
</protein>
<proteinExistence type="evidence at protein level"/>
<reference key="1">
    <citation type="journal article" date="2003" name="Nat. Neurosci.">
        <title>A new phospholipid phosphatase, PRG-1, is involved in axon growth and regenerative sprouting.</title>
        <authorList>
            <person name="Braeuer A.U."/>
            <person name="Savaskan N.E."/>
            <person name="Kuehn H."/>
            <person name="Prehn S."/>
            <person name="Ninnemann O."/>
            <person name="Nitsch R."/>
        </authorList>
    </citation>
    <scope>NUCLEOTIDE SEQUENCE [MRNA]</scope>
    <scope>FUNCTION</scope>
    <scope>SUBCELLULAR LOCATION</scope>
    <scope>TISSUE SPECIFICITY</scope>
    <scope>DEVELOPMENTAL STAGE</scope>
    <scope>CAUTION</scope>
    <source>
        <strain>Sprague-Dawley</strain>
        <strain>Wistar</strain>
        <tissue>Brain</tissue>
        <tissue>Testis</tissue>
    </source>
</reference>
<reference key="2">
    <citation type="journal article" date="2004" name="Nat. Neurosci.">
        <title>Is PRG-1 a new lipid phosphatase?</title>
        <authorList>
            <person name="McDermott M.I."/>
            <person name="Sigal Y.J."/>
            <person name="Sciorra V.A."/>
            <person name="Morris A.J."/>
        </authorList>
    </citation>
    <scope>CAUTION</scope>
</reference>
<reference key="3">
    <citation type="journal article" date="2012" name="Nat. Commun.">
        <title>Quantitative maps of protein phosphorylation sites across 14 different rat organs and tissues.</title>
        <authorList>
            <person name="Lundby A."/>
            <person name="Secher A."/>
            <person name="Lage K."/>
            <person name="Nordsborg N.B."/>
            <person name="Dmytriyev A."/>
            <person name="Lundby C."/>
            <person name="Olsen J.V."/>
        </authorList>
    </citation>
    <scope>PHOSPHORYLATION [LARGE SCALE ANALYSIS] AT SER-347; SER-386 AND SER-474</scope>
    <scope>IDENTIFICATION BY MASS SPECTROMETRY [LARGE SCALE ANALYSIS]</scope>
</reference>
<name>PLPR4_RAT</name>
<evidence type="ECO:0000250" key="1">
    <source>
        <dbReference type="UniProtKB" id="Q7TME0"/>
    </source>
</evidence>
<evidence type="ECO:0000250" key="2">
    <source>
        <dbReference type="UniProtKB" id="Q7Z2D5"/>
    </source>
</evidence>
<evidence type="ECO:0000255" key="3"/>
<evidence type="ECO:0000256" key="4">
    <source>
        <dbReference type="SAM" id="MobiDB-lite"/>
    </source>
</evidence>
<evidence type="ECO:0000269" key="5">
    <source>
    </source>
</evidence>
<evidence type="ECO:0000269" key="6">
    <source>
    </source>
</evidence>
<evidence type="ECO:0000303" key="7">
    <source>
    </source>
</evidence>
<evidence type="ECO:0000305" key="8"/>
<evidence type="ECO:0000305" key="9">
    <source>
    </source>
</evidence>
<evidence type="ECO:0000305" key="10">
    <source>
    </source>
</evidence>
<evidence type="ECO:0000312" key="11">
    <source>
        <dbReference type="RGD" id="727806"/>
    </source>
</evidence>
<evidence type="ECO:0007744" key="12">
    <source>
    </source>
</evidence>
<keyword id="KW-1003">Cell membrane</keyword>
<keyword id="KW-0325">Glycoprotein</keyword>
<keyword id="KW-0472">Membrane</keyword>
<keyword id="KW-0597">Phosphoprotein</keyword>
<keyword id="KW-0628">Postsynaptic cell membrane</keyword>
<keyword id="KW-1185">Reference proteome</keyword>
<keyword id="KW-0770">Synapse</keyword>
<keyword id="KW-0812">Transmembrane</keyword>
<keyword id="KW-1133">Transmembrane helix</keyword>
<dbReference type="EMBL" id="AY266268">
    <property type="protein sequence ID" value="AAP41101.1"/>
    <property type="molecule type" value="mRNA"/>
</dbReference>
<dbReference type="EMBL" id="AF541280">
    <property type="protein sequence ID" value="AAP57769.1"/>
    <property type="molecule type" value="mRNA"/>
</dbReference>
<dbReference type="SMR" id="Q7TMB7"/>
<dbReference type="FunCoup" id="Q7TMB7">
    <property type="interactions" value="564"/>
</dbReference>
<dbReference type="STRING" id="10116.ENSRNOP00000022625"/>
<dbReference type="SwissLipids" id="SLP:000000722"/>
<dbReference type="GlyCosmos" id="Q7TMB7">
    <property type="glycosylation" value="6 sites, No reported glycans"/>
</dbReference>
<dbReference type="GlyGen" id="Q7TMB7">
    <property type="glycosylation" value="6 sites"/>
</dbReference>
<dbReference type="iPTMnet" id="Q7TMB7"/>
<dbReference type="PhosphoSitePlus" id="Q7TMB7"/>
<dbReference type="PaxDb" id="10116-ENSRNOP00000022625"/>
<dbReference type="UCSC" id="RGD:727806">
    <property type="organism name" value="rat"/>
</dbReference>
<dbReference type="AGR" id="RGD:727806"/>
<dbReference type="RGD" id="727806">
    <property type="gene designation" value="Plppr4"/>
</dbReference>
<dbReference type="eggNOG" id="KOG3030">
    <property type="taxonomic scope" value="Eukaryota"/>
</dbReference>
<dbReference type="InParanoid" id="Q7TMB7"/>
<dbReference type="PhylomeDB" id="Q7TMB7"/>
<dbReference type="Reactome" id="R-RNO-419408">
    <property type="pathway name" value="Lysosphingolipid and LPA receptors"/>
</dbReference>
<dbReference type="PRO" id="PR:Q7TMB7"/>
<dbReference type="Proteomes" id="UP000002494">
    <property type="component" value="Unplaced"/>
</dbReference>
<dbReference type="GO" id="GO:0009897">
    <property type="term" value="C:external side of plasma membrane"/>
    <property type="evidence" value="ECO:0000314"/>
    <property type="project" value="RGD"/>
</dbReference>
<dbReference type="GO" id="GO:0098978">
    <property type="term" value="C:glutamatergic synapse"/>
    <property type="evidence" value="ECO:0000266"/>
    <property type="project" value="RGD"/>
</dbReference>
<dbReference type="GO" id="GO:0005886">
    <property type="term" value="C:plasma membrane"/>
    <property type="evidence" value="ECO:0000318"/>
    <property type="project" value="GO_Central"/>
</dbReference>
<dbReference type="GO" id="GO:0098839">
    <property type="term" value="C:postsynaptic density membrane"/>
    <property type="evidence" value="ECO:0000250"/>
    <property type="project" value="UniProtKB"/>
</dbReference>
<dbReference type="GO" id="GO:0098685">
    <property type="term" value="C:Schaffer collateral - CA1 synapse"/>
    <property type="evidence" value="ECO:0000266"/>
    <property type="project" value="RGD"/>
</dbReference>
<dbReference type="GO" id="GO:0042577">
    <property type="term" value="F:lipid phosphatase activity"/>
    <property type="evidence" value="ECO:0000314"/>
    <property type="project" value="RGD"/>
</dbReference>
<dbReference type="GO" id="GO:0052642">
    <property type="term" value="F:lysophosphatidic acid phosphatase activity"/>
    <property type="evidence" value="ECO:0000315"/>
    <property type="project" value="UniProtKB"/>
</dbReference>
<dbReference type="GO" id="GO:0008195">
    <property type="term" value="F:phosphatidate phosphatase activity"/>
    <property type="evidence" value="ECO:0000318"/>
    <property type="project" value="GO_Central"/>
</dbReference>
<dbReference type="GO" id="GO:0007409">
    <property type="term" value="P:axonogenesis"/>
    <property type="evidence" value="ECO:0000314"/>
    <property type="project" value="RGD"/>
</dbReference>
<dbReference type="GO" id="GO:0007186">
    <property type="term" value="P:G protein-coupled receptor signaling pathway"/>
    <property type="evidence" value="ECO:0000250"/>
    <property type="project" value="UniProtKB"/>
</dbReference>
<dbReference type="GO" id="GO:0048839">
    <property type="term" value="P:inner ear development"/>
    <property type="evidence" value="ECO:0000266"/>
    <property type="project" value="RGD"/>
</dbReference>
<dbReference type="GO" id="GO:0140354">
    <property type="term" value="P:lipid import into cell"/>
    <property type="evidence" value="ECO:0000250"/>
    <property type="project" value="UniProtKB"/>
</dbReference>
<dbReference type="GO" id="GO:0050804">
    <property type="term" value="P:modulation of chemical synaptic transmission"/>
    <property type="evidence" value="ECO:0000266"/>
    <property type="project" value="RGD"/>
</dbReference>
<dbReference type="GO" id="GO:0046839">
    <property type="term" value="P:phospholipid dephosphorylation"/>
    <property type="evidence" value="ECO:0000314"/>
    <property type="project" value="RGD"/>
</dbReference>
<dbReference type="GO" id="GO:0006644">
    <property type="term" value="P:phospholipid metabolic process"/>
    <property type="evidence" value="ECO:0000318"/>
    <property type="project" value="GO_Central"/>
</dbReference>
<dbReference type="GO" id="GO:0099175">
    <property type="term" value="P:regulation of postsynapse organization"/>
    <property type="evidence" value="ECO:0000266"/>
    <property type="project" value="RGD"/>
</dbReference>
<dbReference type="GO" id="GO:0051966">
    <property type="term" value="P:regulation of synaptic transmission, glutamatergic"/>
    <property type="evidence" value="ECO:0000250"/>
    <property type="project" value="UniProtKB"/>
</dbReference>
<dbReference type="GO" id="GO:0007165">
    <property type="term" value="P:signal transduction"/>
    <property type="evidence" value="ECO:0000318"/>
    <property type="project" value="GO_Central"/>
</dbReference>
<dbReference type="CDD" id="cd03384">
    <property type="entry name" value="PAP2_wunen"/>
    <property type="match status" value="1"/>
</dbReference>
<dbReference type="FunFam" id="1.20.144.10:FF:000012">
    <property type="entry name" value="Phospholipid phosphatase-related protein type 4"/>
    <property type="match status" value="1"/>
</dbReference>
<dbReference type="Gene3D" id="1.20.144.10">
    <property type="entry name" value="Phosphatidic acid phosphatase type 2/haloperoxidase"/>
    <property type="match status" value="1"/>
</dbReference>
<dbReference type="InterPro" id="IPR036938">
    <property type="entry name" value="P_Acid_Pase_2/haloperoxi_sf"/>
</dbReference>
<dbReference type="InterPro" id="IPR000326">
    <property type="entry name" value="P_Acid_Pase_2/haloperoxidase"/>
</dbReference>
<dbReference type="InterPro" id="IPR043216">
    <property type="entry name" value="PA_PP_rel"/>
</dbReference>
<dbReference type="PANTHER" id="PTHR10165">
    <property type="entry name" value="LIPID PHOSPHATE PHOSPHATASE"/>
    <property type="match status" value="1"/>
</dbReference>
<dbReference type="PANTHER" id="PTHR10165:SF13">
    <property type="entry name" value="PHOSPHOLIPID PHOSPHATASE-RELATED PROTEIN TYPE 4"/>
    <property type="match status" value="1"/>
</dbReference>
<dbReference type="Pfam" id="PF01569">
    <property type="entry name" value="PAP2"/>
    <property type="match status" value="1"/>
</dbReference>
<dbReference type="SMART" id="SM00014">
    <property type="entry name" value="acidPPc"/>
    <property type="match status" value="1"/>
</dbReference>
<dbReference type="SUPFAM" id="SSF48317">
    <property type="entry name" value="Acid phosphatase/Vanadium-dependent haloperoxidase"/>
    <property type="match status" value="1"/>
</dbReference>
<organism>
    <name type="scientific">Rattus norvegicus</name>
    <name type="common">Rat</name>
    <dbReference type="NCBI Taxonomy" id="10116"/>
    <lineage>
        <taxon>Eukaryota</taxon>
        <taxon>Metazoa</taxon>
        <taxon>Chordata</taxon>
        <taxon>Craniata</taxon>
        <taxon>Vertebrata</taxon>
        <taxon>Euteleostomi</taxon>
        <taxon>Mammalia</taxon>
        <taxon>Eutheria</taxon>
        <taxon>Euarchontoglires</taxon>
        <taxon>Glires</taxon>
        <taxon>Rodentia</taxon>
        <taxon>Myomorpha</taxon>
        <taxon>Muroidea</taxon>
        <taxon>Muridae</taxon>
        <taxon>Murinae</taxon>
        <taxon>Rattus</taxon>
    </lineage>
</organism>
<comment type="function">
    <text evidence="1 5">Postsynaptic density membrane protein that indirectly regulates glutamatergic synaptic transmission through lysophosphatidic acid (LPA)-mediated signaling pathways. Binds lysophosphatidic acid (LPA) and mediates its internalization into cells. Could act as receptor or a transporter of this lipid at the post-synaptic membrane (By similarity). Modulates lysophosphatidic acid (LPA) activity in neuron axonal outgrowth during development by attenuating phospholipid-induced axon collapse (PubMed:12730698).</text>
</comment>
<comment type="subcellular location">
    <subcellularLocation>
        <location evidence="9">Postsynaptic density membrane</location>
        <topology evidence="3">Multi-pass membrane protein</topology>
    </subcellularLocation>
</comment>
<comment type="tissue specificity">
    <text evidence="5">Specifically expressed in neurons (at protein level).</text>
</comment>
<comment type="developmental stage">
    <text evidence="5">Expressed in the subventricular zone and specifically in the hippocampal anlage at embryonic day 19 (19 dpc). From postnatal stages on, expressed in the hippocampus and in the entorhinal cortex. In the dentate gyrus weakly expressed in the infrapyramidal blade at P0 and at P5 expressed in the suprapyramidal blade. This expression remains unchanged during maturation. A reduced expression is seen in adult brain.</text>
</comment>
<comment type="PTM">
    <text evidence="1">O-glycosylated. Probably at Ser-347.</text>
</comment>
<comment type="similarity">
    <text evidence="8">Belongs to the PA-phosphatase related phosphoesterase family.</text>
</comment>
<comment type="caution">
    <text evidence="5 6">Originally described as a 2-lysophosphatidate/LPA phosphatase (PubMed:12730698). However, following studies suggested it does not have such activity or only a residual one (PubMed:15280885). This is further supported by the fact that the phosphatase sequence motifs as well as the His residue acting as a nucleophile in active phosphatases of the PA-phosphatase related phosphoesterase family are not conserved (PubMed:15280885).</text>
</comment>
<gene>
    <name evidence="11" type="primary">Plppr4</name>
    <name evidence="2" type="synonym">Lppr4</name>
    <name evidence="2" type="synonym">Php1</name>
    <name evidence="7" type="synonym">Prg1</name>
</gene>